<sequence>RFKKIRRLGALPGLTSKRPRSGSDLKNQLRSGKRSQYRIRLEEKQKLRFHYGLTERQLLKYVHMAGKAKGSTGQVLLQLLEMRLDNILFRLGMASTIPGARQLVNHRHILVNGRIVDIPSYRCKPRDIITTKDKERSKVLIQNYIASSSHEELPNHLTIDPLQYKGLVNQIIDSKWVGLKINELLVVEYYSRQT</sequence>
<organism>
    <name type="scientific">Cypella sp. (strain Porto Alegre 027)</name>
    <dbReference type="NCBI Taxonomy" id="58952"/>
    <lineage>
        <taxon>Eukaryota</taxon>
        <taxon>Viridiplantae</taxon>
        <taxon>Streptophyta</taxon>
        <taxon>Embryophyta</taxon>
        <taxon>Tracheophyta</taxon>
        <taxon>Spermatophyta</taxon>
        <taxon>Magnoliopsida</taxon>
        <taxon>Liliopsida</taxon>
        <taxon>Asparagales</taxon>
        <taxon>Iridaceae</taxon>
        <taxon>Iridoideae</taxon>
        <taxon>Tigridieae</taxon>
        <taxon>Cypella</taxon>
    </lineage>
</organism>
<protein>
    <recommendedName>
        <fullName evidence="2">Small ribosomal subunit protein uS4c</fullName>
    </recommendedName>
    <alternativeName>
        <fullName>30S ribosomal protein S4, chloroplastic</fullName>
    </alternativeName>
</protein>
<geneLocation type="chloroplast"/>
<name>RR4_CYPSP</name>
<dbReference type="EMBL" id="Z68254">
    <property type="protein sequence ID" value="CAA92552.1"/>
    <property type="molecule type" value="Genomic_DNA"/>
</dbReference>
<dbReference type="SMR" id="O20106"/>
<dbReference type="GO" id="GO:0009507">
    <property type="term" value="C:chloroplast"/>
    <property type="evidence" value="ECO:0007669"/>
    <property type="project" value="UniProtKB-SubCell"/>
</dbReference>
<dbReference type="GO" id="GO:0015935">
    <property type="term" value="C:small ribosomal subunit"/>
    <property type="evidence" value="ECO:0007669"/>
    <property type="project" value="InterPro"/>
</dbReference>
<dbReference type="GO" id="GO:0019843">
    <property type="term" value="F:rRNA binding"/>
    <property type="evidence" value="ECO:0007669"/>
    <property type="project" value="UniProtKB-KW"/>
</dbReference>
<dbReference type="GO" id="GO:0003735">
    <property type="term" value="F:structural constituent of ribosome"/>
    <property type="evidence" value="ECO:0007669"/>
    <property type="project" value="InterPro"/>
</dbReference>
<dbReference type="GO" id="GO:0042274">
    <property type="term" value="P:ribosomal small subunit biogenesis"/>
    <property type="evidence" value="ECO:0007669"/>
    <property type="project" value="TreeGrafter"/>
</dbReference>
<dbReference type="GO" id="GO:0006412">
    <property type="term" value="P:translation"/>
    <property type="evidence" value="ECO:0007669"/>
    <property type="project" value="InterPro"/>
</dbReference>
<dbReference type="CDD" id="cd00165">
    <property type="entry name" value="S4"/>
    <property type="match status" value="1"/>
</dbReference>
<dbReference type="FunFam" id="1.10.1050.10:FF:000002">
    <property type="entry name" value="30S ribosomal protein S4, chloroplastic"/>
    <property type="match status" value="1"/>
</dbReference>
<dbReference type="FunFam" id="3.10.290.10:FF:000081">
    <property type="entry name" value="30S ribosomal protein S4, chloroplastic"/>
    <property type="match status" value="1"/>
</dbReference>
<dbReference type="Gene3D" id="1.10.1050.10">
    <property type="entry name" value="Ribosomal Protein S4 Delta 41, Chain A, domain 1"/>
    <property type="match status" value="1"/>
</dbReference>
<dbReference type="Gene3D" id="3.10.290.10">
    <property type="entry name" value="RNA-binding S4 domain"/>
    <property type="match status" value="1"/>
</dbReference>
<dbReference type="HAMAP" id="MF_01306_B">
    <property type="entry name" value="Ribosomal_uS4_B"/>
    <property type="match status" value="1"/>
</dbReference>
<dbReference type="InterPro" id="IPR022801">
    <property type="entry name" value="Ribosomal_uS4"/>
</dbReference>
<dbReference type="InterPro" id="IPR005709">
    <property type="entry name" value="Ribosomal_uS4_bac-type"/>
</dbReference>
<dbReference type="InterPro" id="IPR018079">
    <property type="entry name" value="Ribosomal_uS4_CS"/>
</dbReference>
<dbReference type="InterPro" id="IPR001912">
    <property type="entry name" value="Ribosomal_uS4_N"/>
</dbReference>
<dbReference type="InterPro" id="IPR002942">
    <property type="entry name" value="S4_RNA-bd"/>
</dbReference>
<dbReference type="InterPro" id="IPR036986">
    <property type="entry name" value="S4_RNA-bd_sf"/>
</dbReference>
<dbReference type="NCBIfam" id="NF003717">
    <property type="entry name" value="PRK05327.1"/>
    <property type="match status" value="1"/>
</dbReference>
<dbReference type="NCBIfam" id="TIGR01017">
    <property type="entry name" value="rpsD_bact"/>
    <property type="match status" value="1"/>
</dbReference>
<dbReference type="PANTHER" id="PTHR11831">
    <property type="entry name" value="30S 40S RIBOSOMAL PROTEIN"/>
    <property type="match status" value="1"/>
</dbReference>
<dbReference type="PANTHER" id="PTHR11831:SF4">
    <property type="entry name" value="SMALL RIBOSOMAL SUBUNIT PROTEIN US4M"/>
    <property type="match status" value="1"/>
</dbReference>
<dbReference type="Pfam" id="PF00163">
    <property type="entry name" value="Ribosomal_S4"/>
    <property type="match status" value="1"/>
</dbReference>
<dbReference type="Pfam" id="PF01479">
    <property type="entry name" value="S4"/>
    <property type="match status" value="1"/>
</dbReference>
<dbReference type="SMART" id="SM01390">
    <property type="entry name" value="Ribosomal_S4"/>
    <property type="match status" value="1"/>
</dbReference>
<dbReference type="SMART" id="SM00363">
    <property type="entry name" value="S4"/>
    <property type="match status" value="1"/>
</dbReference>
<dbReference type="SUPFAM" id="SSF55174">
    <property type="entry name" value="Alpha-L RNA-binding motif"/>
    <property type="match status" value="1"/>
</dbReference>
<dbReference type="PROSITE" id="PS00632">
    <property type="entry name" value="RIBOSOMAL_S4"/>
    <property type="match status" value="1"/>
</dbReference>
<dbReference type="PROSITE" id="PS50889">
    <property type="entry name" value="S4"/>
    <property type="match status" value="1"/>
</dbReference>
<feature type="chain" id="PRO_0000132564" description="Small ribosomal subunit protein uS4c">
    <location>
        <begin position="1" status="less than"/>
        <end position="194" status="greater than"/>
    </location>
</feature>
<feature type="domain" description="S4 RNA-binding">
    <location>
        <begin position="82"/>
        <end position="143"/>
    </location>
</feature>
<feature type="non-terminal residue">
    <location>
        <position position="1"/>
    </location>
</feature>
<feature type="non-terminal residue">
    <location>
        <position position="194"/>
    </location>
</feature>
<evidence type="ECO:0000250" key="1"/>
<evidence type="ECO:0000305" key="2"/>
<keyword id="KW-0150">Chloroplast</keyword>
<keyword id="KW-0934">Plastid</keyword>
<keyword id="KW-0687">Ribonucleoprotein</keyword>
<keyword id="KW-0689">Ribosomal protein</keyword>
<keyword id="KW-0694">RNA-binding</keyword>
<keyword id="KW-0699">rRNA-binding</keyword>
<accession>O20106</accession>
<gene>
    <name type="primary">rps4</name>
</gene>
<reference key="1">
    <citation type="journal article" date="1997" name="Plant Syst. Evol.">
        <title>Phylogenetic analysis of Iridaceae with parsimony and distance methods using the plastid gene rps4.</title>
        <authorList>
            <person name="Souza-Chies T.T."/>
            <person name="Bittar G."/>
            <person name="Nadot S."/>
            <person name="Carter L."/>
            <person name="Besin E."/>
            <person name="Lejeune B.P."/>
        </authorList>
    </citation>
    <scope>NUCLEOTIDE SEQUENCE [GENOMIC DNA]</scope>
</reference>
<proteinExistence type="inferred from homology"/>
<comment type="function">
    <text evidence="1">One of the primary rRNA binding proteins, it binds directly to 16S rRNA where it nucleates assembly of the body of the 30S subunit.</text>
</comment>
<comment type="function">
    <text evidence="1">With S5 and S12 plays an important role in translational accuracy.</text>
</comment>
<comment type="subunit">
    <text evidence="1">Part of the 30S ribosomal subunit. Contacts protein S5. The interaction surface between S4 and S5 is involved in control of translational fidelity (By similarity).</text>
</comment>
<comment type="subcellular location">
    <subcellularLocation>
        <location>Plastid</location>
        <location>Chloroplast</location>
    </subcellularLocation>
</comment>
<comment type="similarity">
    <text evidence="2">Belongs to the universal ribosomal protein uS4 family.</text>
</comment>